<reference key="1">
    <citation type="journal article" date="2008" name="DNA Res.">
        <title>Comparative genome analysis of Lactobacillus reuteri and Lactobacillus fermentum reveal a genomic island for reuterin and cobalamin production.</title>
        <authorList>
            <person name="Morita H."/>
            <person name="Toh H."/>
            <person name="Fukuda S."/>
            <person name="Horikawa H."/>
            <person name="Oshima K."/>
            <person name="Suzuki T."/>
            <person name="Murakami M."/>
            <person name="Hisamatsu S."/>
            <person name="Kato Y."/>
            <person name="Takizawa T."/>
            <person name="Fukuoka H."/>
            <person name="Yoshimura T."/>
            <person name="Itoh K."/>
            <person name="O'Sullivan D.J."/>
            <person name="McKay L.L."/>
            <person name="Ohno H."/>
            <person name="Kikuchi J."/>
            <person name="Masaoka T."/>
            <person name="Hattori M."/>
        </authorList>
    </citation>
    <scope>NUCLEOTIDE SEQUENCE [LARGE SCALE GENOMIC DNA]</scope>
    <source>
        <strain>JCM 1112</strain>
    </source>
</reference>
<accession>B2G6W1</accession>
<sequence length="350" mass="39225">MLTQRQKKILQAIVRQYTSTGQPVGSKHLAEKLPFKVSSATVRNEMAVLEDNDLILKEHSSSGRIPSKRGYRYYVDNLLDPQAVTDNDLVVIQNSLGNGFQKIDEIISHSADILSNLTSYTAFTLKPEQESVRLSGFRVVPLGNHKVIAILVTDSGEVENQSFTLPPDIDTDAMQAVIRMINDQLVGLPLSEVVKRLKDDIPLQVLHYMHSPDGFLDIFDNVLSQAARERFFVGGRLNLLDFASTHDPHAIQSLYGLLDKNDNLSNILDSTLTSDNGVNVKIGQEISKNKLLDDYSLITASYNVEQYGRGIIAVLGPTRMPYSRTIGIVNAFRQELAKRLLDFYRHYYDS</sequence>
<name>HRCA_LIMRJ</name>
<organism>
    <name type="scientific">Limosilactobacillus reuteri subsp. reuteri (strain JCM 1112)</name>
    <name type="common">Lactobacillus reuteri</name>
    <dbReference type="NCBI Taxonomy" id="557433"/>
    <lineage>
        <taxon>Bacteria</taxon>
        <taxon>Bacillati</taxon>
        <taxon>Bacillota</taxon>
        <taxon>Bacilli</taxon>
        <taxon>Lactobacillales</taxon>
        <taxon>Lactobacillaceae</taxon>
        <taxon>Limosilactobacillus</taxon>
    </lineage>
</organism>
<protein>
    <recommendedName>
        <fullName evidence="1">Heat-inducible transcription repressor HrcA</fullName>
    </recommendedName>
</protein>
<evidence type="ECO:0000255" key="1">
    <source>
        <dbReference type="HAMAP-Rule" id="MF_00081"/>
    </source>
</evidence>
<gene>
    <name evidence="1" type="primary">hrcA</name>
    <name type="ordered locus">LAR_0677</name>
</gene>
<comment type="function">
    <text evidence="1">Negative regulator of class I heat shock genes (grpE-dnaK-dnaJ and groELS operons). Prevents heat-shock induction of these operons.</text>
</comment>
<comment type="similarity">
    <text evidence="1">Belongs to the HrcA family.</text>
</comment>
<keyword id="KW-0678">Repressor</keyword>
<keyword id="KW-0346">Stress response</keyword>
<keyword id="KW-0804">Transcription</keyword>
<keyword id="KW-0805">Transcription regulation</keyword>
<proteinExistence type="inferred from homology"/>
<feature type="chain" id="PRO_1000092815" description="Heat-inducible transcription repressor HrcA">
    <location>
        <begin position="1"/>
        <end position="350"/>
    </location>
</feature>
<dbReference type="EMBL" id="AP007281">
    <property type="protein sequence ID" value="BAG25193.1"/>
    <property type="molecule type" value="Genomic_DNA"/>
</dbReference>
<dbReference type="RefSeq" id="WP_003668173.1">
    <property type="nucleotide sequence ID" value="NC_010609.1"/>
</dbReference>
<dbReference type="SMR" id="B2G6W1"/>
<dbReference type="KEGG" id="lrf:LAR_0677"/>
<dbReference type="HOGENOM" id="CLU_050019_1_0_9"/>
<dbReference type="GO" id="GO:0003677">
    <property type="term" value="F:DNA binding"/>
    <property type="evidence" value="ECO:0007669"/>
    <property type="project" value="InterPro"/>
</dbReference>
<dbReference type="GO" id="GO:0045892">
    <property type="term" value="P:negative regulation of DNA-templated transcription"/>
    <property type="evidence" value="ECO:0007669"/>
    <property type="project" value="UniProtKB-UniRule"/>
</dbReference>
<dbReference type="Gene3D" id="3.30.450.40">
    <property type="match status" value="1"/>
</dbReference>
<dbReference type="Gene3D" id="3.30.390.60">
    <property type="entry name" value="Heat-inducible transcription repressor hrca homolog, domain 3"/>
    <property type="match status" value="1"/>
</dbReference>
<dbReference type="Gene3D" id="1.10.10.10">
    <property type="entry name" value="Winged helix-like DNA-binding domain superfamily/Winged helix DNA-binding domain"/>
    <property type="match status" value="1"/>
</dbReference>
<dbReference type="HAMAP" id="MF_00081">
    <property type="entry name" value="HrcA"/>
    <property type="match status" value="1"/>
</dbReference>
<dbReference type="InterPro" id="IPR029016">
    <property type="entry name" value="GAF-like_dom_sf"/>
</dbReference>
<dbReference type="InterPro" id="IPR002571">
    <property type="entry name" value="HrcA"/>
</dbReference>
<dbReference type="InterPro" id="IPR021153">
    <property type="entry name" value="HrcA_C"/>
</dbReference>
<dbReference type="InterPro" id="IPR036388">
    <property type="entry name" value="WH-like_DNA-bd_sf"/>
</dbReference>
<dbReference type="InterPro" id="IPR036390">
    <property type="entry name" value="WH_DNA-bd_sf"/>
</dbReference>
<dbReference type="InterPro" id="IPR005104">
    <property type="entry name" value="WHTH_HrcA_DNA-bd"/>
</dbReference>
<dbReference type="InterPro" id="IPR023120">
    <property type="entry name" value="WHTH_transcript_rep_HrcA_IDD"/>
</dbReference>
<dbReference type="NCBIfam" id="TIGR00331">
    <property type="entry name" value="hrcA"/>
    <property type="match status" value="1"/>
</dbReference>
<dbReference type="PANTHER" id="PTHR34824">
    <property type="entry name" value="HEAT-INDUCIBLE TRANSCRIPTION REPRESSOR HRCA"/>
    <property type="match status" value="1"/>
</dbReference>
<dbReference type="PANTHER" id="PTHR34824:SF1">
    <property type="entry name" value="HEAT-INDUCIBLE TRANSCRIPTION REPRESSOR HRCA"/>
    <property type="match status" value="1"/>
</dbReference>
<dbReference type="Pfam" id="PF01628">
    <property type="entry name" value="HrcA"/>
    <property type="match status" value="1"/>
</dbReference>
<dbReference type="Pfam" id="PF03444">
    <property type="entry name" value="HrcA_DNA-bdg"/>
    <property type="match status" value="1"/>
</dbReference>
<dbReference type="PIRSF" id="PIRSF005485">
    <property type="entry name" value="HrcA"/>
    <property type="match status" value="1"/>
</dbReference>
<dbReference type="SUPFAM" id="SSF55781">
    <property type="entry name" value="GAF domain-like"/>
    <property type="match status" value="1"/>
</dbReference>
<dbReference type="SUPFAM" id="SSF46785">
    <property type="entry name" value="Winged helix' DNA-binding domain"/>
    <property type="match status" value="1"/>
</dbReference>